<evidence type="ECO:0000250" key="1"/>
<evidence type="ECO:0000250" key="2">
    <source>
        <dbReference type="UniProtKB" id="P00157"/>
    </source>
</evidence>
<evidence type="ECO:0000255" key="3">
    <source>
        <dbReference type="PROSITE-ProRule" id="PRU00967"/>
    </source>
</evidence>
<evidence type="ECO:0000255" key="4">
    <source>
        <dbReference type="PROSITE-ProRule" id="PRU00968"/>
    </source>
</evidence>
<sequence>MTNIRKTHPLIKIINHSFIDLPAPSNISAWWNFGSLLGICLIIQILTGLFLAMHYTSDTMTAFSSVTHICRDVNYGWLIRYMHANGASMFFICLFLHVGRGLYYGSYTYFETWNIGVILLFAVMATAFMGYVLPWGQMSFWGATVITNLLSAIPYIGTTLVEWIWGGFSVDKATLTRFFAFHFILPFIITALVMVHLLFLHETGSNNPSGLISDSDKIPFHPYYTIKDILGILLLILVLMILVLFSPDLLGDPDNYTPANPLNTPPHIKPEWYFLFAYAILRSIPNKLGGVLALVLSILILMLFPILHMSKQRSMMFRPLSQCMFWILVADLFTLTWIGGQPVEYPFIIIGQLASILYFMIILLIMPAISLFENKLLKW</sequence>
<name>CYB_NEORU</name>
<gene>
    <name type="primary">MT-CYB</name>
    <name type="synonym">COB</name>
    <name type="synonym">CYTB</name>
    <name type="synonym">MTCYB</name>
</gene>
<keyword id="KW-0249">Electron transport</keyword>
<keyword id="KW-0349">Heme</keyword>
<keyword id="KW-0408">Iron</keyword>
<keyword id="KW-0472">Membrane</keyword>
<keyword id="KW-0479">Metal-binding</keyword>
<keyword id="KW-0496">Mitochondrion</keyword>
<keyword id="KW-0999">Mitochondrion inner membrane</keyword>
<keyword id="KW-0679">Respiratory chain</keyword>
<keyword id="KW-0812">Transmembrane</keyword>
<keyword id="KW-1133">Transmembrane helix</keyword>
<keyword id="KW-0813">Transport</keyword>
<keyword id="KW-0830">Ubiquinone</keyword>
<accession>Q94Y51</accession>
<comment type="function">
    <text evidence="2">Component of the ubiquinol-cytochrome c reductase complex (complex III or cytochrome b-c1 complex) that is part of the mitochondrial respiratory chain. The b-c1 complex mediates electron transfer from ubiquinol to cytochrome c. Contributes to the generation of a proton gradient across the mitochondrial membrane that is then used for ATP synthesis.</text>
</comment>
<comment type="cofactor">
    <cofactor evidence="2">
        <name>heme b</name>
        <dbReference type="ChEBI" id="CHEBI:60344"/>
    </cofactor>
    <text evidence="2">Binds 2 heme b groups non-covalently.</text>
</comment>
<comment type="subunit">
    <text evidence="2">The cytochrome bc1 complex contains 11 subunits: 3 respiratory subunits (MT-CYB, CYC1 and UQCRFS1), 2 core proteins (UQCRC1 and UQCRC2) and 6 low-molecular weight proteins (UQCRH/QCR6, UQCRB/QCR7, UQCRQ/QCR8, UQCR10/QCR9, UQCR11/QCR10 and a cleavage product of UQCRFS1). This cytochrome bc1 complex then forms a dimer.</text>
</comment>
<comment type="subcellular location">
    <subcellularLocation>
        <location evidence="2">Mitochondrion inner membrane</location>
        <topology evidence="2">Multi-pass membrane protein</topology>
    </subcellularLocation>
</comment>
<comment type="miscellaneous">
    <text evidence="1">Heme 1 (or BL or b562) is low-potential and absorbs at about 562 nm, and heme 2 (or BH or b566) is high-potential and absorbs at about 566 nm.</text>
</comment>
<comment type="similarity">
    <text evidence="3 4">Belongs to the cytochrome b family.</text>
</comment>
<comment type="caution">
    <text evidence="2">The full-length protein contains only eight transmembrane helices, not nine as predicted by bioinformatics tools.</text>
</comment>
<reference key="1">
    <citation type="journal article" date="2001" name="Mol. Phylogenet. Evol.">
        <title>Molecular phylogeny of the chipmunks inferred from mitochondrial cytochrome b and cytochrome oxidase II gene sequences.</title>
        <authorList>
            <person name="Piaggio A.J."/>
            <person name="Spicer G.S."/>
        </authorList>
    </citation>
    <scope>NUCLEOTIDE SEQUENCE [GENOMIC DNA]</scope>
</reference>
<feature type="chain" id="PRO_0000061641" description="Cytochrome b">
    <location>
        <begin position="1"/>
        <end position="379"/>
    </location>
</feature>
<feature type="transmembrane region" description="Helical" evidence="2">
    <location>
        <begin position="33"/>
        <end position="53"/>
    </location>
</feature>
<feature type="transmembrane region" description="Helical" evidence="2">
    <location>
        <begin position="77"/>
        <end position="98"/>
    </location>
</feature>
<feature type="transmembrane region" description="Helical" evidence="2">
    <location>
        <begin position="113"/>
        <end position="133"/>
    </location>
</feature>
<feature type="transmembrane region" description="Helical" evidence="2">
    <location>
        <begin position="178"/>
        <end position="198"/>
    </location>
</feature>
<feature type="transmembrane region" description="Helical" evidence="2">
    <location>
        <begin position="226"/>
        <end position="246"/>
    </location>
</feature>
<feature type="transmembrane region" description="Helical" evidence="2">
    <location>
        <begin position="288"/>
        <end position="308"/>
    </location>
</feature>
<feature type="transmembrane region" description="Helical" evidence="2">
    <location>
        <begin position="320"/>
        <end position="340"/>
    </location>
</feature>
<feature type="transmembrane region" description="Helical" evidence="2">
    <location>
        <begin position="347"/>
        <end position="367"/>
    </location>
</feature>
<feature type="binding site" description="axial binding residue" evidence="2">
    <location>
        <position position="83"/>
    </location>
    <ligand>
        <name>heme b</name>
        <dbReference type="ChEBI" id="CHEBI:60344"/>
        <label>b562</label>
    </ligand>
    <ligandPart>
        <name>Fe</name>
        <dbReference type="ChEBI" id="CHEBI:18248"/>
    </ligandPart>
</feature>
<feature type="binding site" description="axial binding residue" evidence="2">
    <location>
        <position position="97"/>
    </location>
    <ligand>
        <name>heme b</name>
        <dbReference type="ChEBI" id="CHEBI:60344"/>
        <label>b566</label>
    </ligand>
    <ligandPart>
        <name>Fe</name>
        <dbReference type="ChEBI" id="CHEBI:18248"/>
    </ligandPart>
</feature>
<feature type="binding site" description="axial binding residue" evidence="2">
    <location>
        <position position="182"/>
    </location>
    <ligand>
        <name>heme b</name>
        <dbReference type="ChEBI" id="CHEBI:60344"/>
        <label>b562</label>
    </ligand>
    <ligandPart>
        <name>Fe</name>
        <dbReference type="ChEBI" id="CHEBI:18248"/>
    </ligandPart>
</feature>
<feature type="binding site" description="axial binding residue" evidence="2">
    <location>
        <position position="196"/>
    </location>
    <ligand>
        <name>heme b</name>
        <dbReference type="ChEBI" id="CHEBI:60344"/>
        <label>b566</label>
    </ligand>
    <ligandPart>
        <name>Fe</name>
        <dbReference type="ChEBI" id="CHEBI:18248"/>
    </ligandPart>
</feature>
<feature type="binding site" evidence="2">
    <location>
        <position position="201"/>
    </location>
    <ligand>
        <name>a ubiquinone</name>
        <dbReference type="ChEBI" id="CHEBI:16389"/>
    </ligand>
</feature>
<dbReference type="EMBL" id="AF147661">
    <property type="protein sequence ID" value="AAL14060.1"/>
    <property type="molecule type" value="Genomic_DNA"/>
</dbReference>
<dbReference type="SMR" id="Q94Y51"/>
<dbReference type="GO" id="GO:0005743">
    <property type="term" value="C:mitochondrial inner membrane"/>
    <property type="evidence" value="ECO:0007669"/>
    <property type="project" value="UniProtKB-SubCell"/>
</dbReference>
<dbReference type="GO" id="GO:0045275">
    <property type="term" value="C:respiratory chain complex III"/>
    <property type="evidence" value="ECO:0007669"/>
    <property type="project" value="InterPro"/>
</dbReference>
<dbReference type="GO" id="GO:0046872">
    <property type="term" value="F:metal ion binding"/>
    <property type="evidence" value="ECO:0007669"/>
    <property type="project" value="UniProtKB-KW"/>
</dbReference>
<dbReference type="GO" id="GO:0008121">
    <property type="term" value="F:ubiquinol-cytochrome-c reductase activity"/>
    <property type="evidence" value="ECO:0007669"/>
    <property type="project" value="InterPro"/>
</dbReference>
<dbReference type="GO" id="GO:0006122">
    <property type="term" value="P:mitochondrial electron transport, ubiquinol to cytochrome c"/>
    <property type="evidence" value="ECO:0007669"/>
    <property type="project" value="TreeGrafter"/>
</dbReference>
<dbReference type="CDD" id="cd00290">
    <property type="entry name" value="cytochrome_b_C"/>
    <property type="match status" value="1"/>
</dbReference>
<dbReference type="CDD" id="cd00284">
    <property type="entry name" value="Cytochrome_b_N"/>
    <property type="match status" value="1"/>
</dbReference>
<dbReference type="FunFam" id="1.20.810.10:FF:000002">
    <property type="entry name" value="Cytochrome b"/>
    <property type="match status" value="1"/>
</dbReference>
<dbReference type="Gene3D" id="1.20.810.10">
    <property type="entry name" value="Cytochrome Bc1 Complex, Chain C"/>
    <property type="match status" value="1"/>
</dbReference>
<dbReference type="InterPro" id="IPR005798">
    <property type="entry name" value="Cyt_b/b6_C"/>
</dbReference>
<dbReference type="InterPro" id="IPR036150">
    <property type="entry name" value="Cyt_b/b6_C_sf"/>
</dbReference>
<dbReference type="InterPro" id="IPR005797">
    <property type="entry name" value="Cyt_b/b6_N"/>
</dbReference>
<dbReference type="InterPro" id="IPR027387">
    <property type="entry name" value="Cytb/b6-like_sf"/>
</dbReference>
<dbReference type="InterPro" id="IPR030689">
    <property type="entry name" value="Cytochrome_b"/>
</dbReference>
<dbReference type="InterPro" id="IPR048260">
    <property type="entry name" value="Cytochrome_b_C_euk/bac"/>
</dbReference>
<dbReference type="InterPro" id="IPR048259">
    <property type="entry name" value="Cytochrome_b_N_euk/bac"/>
</dbReference>
<dbReference type="InterPro" id="IPR016174">
    <property type="entry name" value="Di-haem_cyt_TM"/>
</dbReference>
<dbReference type="PANTHER" id="PTHR19271">
    <property type="entry name" value="CYTOCHROME B"/>
    <property type="match status" value="1"/>
</dbReference>
<dbReference type="PANTHER" id="PTHR19271:SF16">
    <property type="entry name" value="CYTOCHROME B"/>
    <property type="match status" value="1"/>
</dbReference>
<dbReference type="Pfam" id="PF00032">
    <property type="entry name" value="Cytochrom_B_C"/>
    <property type="match status" value="1"/>
</dbReference>
<dbReference type="Pfam" id="PF00033">
    <property type="entry name" value="Cytochrome_B"/>
    <property type="match status" value="1"/>
</dbReference>
<dbReference type="PIRSF" id="PIRSF038885">
    <property type="entry name" value="COB"/>
    <property type="match status" value="1"/>
</dbReference>
<dbReference type="SUPFAM" id="SSF81648">
    <property type="entry name" value="a domain/subunit of cytochrome bc1 complex (Ubiquinol-cytochrome c reductase)"/>
    <property type="match status" value="1"/>
</dbReference>
<dbReference type="SUPFAM" id="SSF81342">
    <property type="entry name" value="Transmembrane di-heme cytochromes"/>
    <property type="match status" value="1"/>
</dbReference>
<dbReference type="PROSITE" id="PS51003">
    <property type="entry name" value="CYTB_CTER"/>
    <property type="match status" value="1"/>
</dbReference>
<dbReference type="PROSITE" id="PS51002">
    <property type="entry name" value="CYTB_NTER"/>
    <property type="match status" value="1"/>
</dbReference>
<geneLocation type="mitochondrion"/>
<protein>
    <recommendedName>
        <fullName>Cytochrome b</fullName>
    </recommendedName>
    <alternativeName>
        <fullName>Complex III subunit 3</fullName>
    </alternativeName>
    <alternativeName>
        <fullName>Complex III subunit III</fullName>
    </alternativeName>
    <alternativeName>
        <fullName>Cytochrome b-c1 complex subunit 3</fullName>
    </alternativeName>
    <alternativeName>
        <fullName>Ubiquinol-cytochrome-c reductase complex cytochrome b subunit</fullName>
    </alternativeName>
</protein>
<organism>
    <name type="scientific">Neotamias ruficaudus</name>
    <name type="common">Red-tailed chipmunk</name>
    <name type="synonym">Tamias ruficaudus</name>
    <dbReference type="NCBI Taxonomy" id="3370382"/>
    <lineage>
        <taxon>Eukaryota</taxon>
        <taxon>Metazoa</taxon>
        <taxon>Chordata</taxon>
        <taxon>Craniata</taxon>
        <taxon>Vertebrata</taxon>
        <taxon>Euteleostomi</taxon>
        <taxon>Mammalia</taxon>
        <taxon>Eutheria</taxon>
        <taxon>Euarchontoglires</taxon>
        <taxon>Glires</taxon>
        <taxon>Rodentia</taxon>
        <taxon>Sciuromorpha</taxon>
        <taxon>Sciuridae</taxon>
        <taxon>Xerinae</taxon>
        <taxon>Marmotini</taxon>
        <taxon>Neotamias</taxon>
    </lineage>
</organism>
<proteinExistence type="inferred from homology"/>